<feature type="chain" id="PRO_0000242469" description="Large ribosomal subunit protein uL4">
    <location>
        <begin position="1"/>
        <end position="249"/>
    </location>
</feature>
<evidence type="ECO:0000255" key="1">
    <source>
        <dbReference type="HAMAP-Rule" id="MF_01328"/>
    </source>
</evidence>
<evidence type="ECO:0000305" key="2"/>
<gene>
    <name evidence="1" type="primary">rpl4</name>
    <name type="ordered locus">Mhun_2252</name>
</gene>
<name>RL4_METHJ</name>
<reference key="1">
    <citation type="journal article" date="2016" name="Stand. Genomic Sci.">
        <title>Complete genome sequence of Methanospirillum hungatei type strain JF1.</title>
        <authorList>
            <person name="Gunsalus R.P."/>
            <person name="Cook L.E."/>
            <person name="Crable B."/>
            <person name="Rohlin L."/>
            <person name="McDonald E."/>
            <person name="Mouttaki H."/>
            <person name="Sieber J.R."/>
            <person name="Poweleit N."/>
            <person name="Zhou H."/>
            <person name="Lapidus A.L."/>
            <person name="Daligault H.E."/>
            <person name="Land M."/>
            <person name="Gilna P."/>
            <person name="Ivanova N."/>
            <person name="Kyrpides N."/>
            <person name="Culley D.E."/>
            <person name="McInerney M.J."/>
        </authorList>
    </citation>
    <scope>NUCLEOTIDE SEQUENCE [LARGE SCALE GENOMIC DNA]</scope>
    <source>
        <strain>ATCC 27890 / DSM 864 / NBRC 100397 / JF-1</strain>
    </source>
</reference>
<comment type="function">
    <text evidence="1">One of the primary rRNA binding proteins, this protein initially binds near the 5'-end of the 23S rRNA. It is important during the early stages of 50S assembly. It makes multiple contacts with different domains of the 23S rRNA in the assembled 50S subunit and ribosome.</text>
</comment>
<comment type="function">
    <text evidence="1">Forms part of the polypeptide exit tunnel.</text>
</comment>
<comment type="subunit">
    <text evidence="1">Part of the 50S ribosomal subunit.</text>
</comment>
<comment type="similarity">
    <text evidence="1">Belongs to the universal ribosomal protein uL4 family.</text>
</comment>
<organism>
    <name type="scientific">Methanospirillum hungatei JF-1 (strain ATCC 27890 / DSM 864 / NBRC 100397 / JF-1)</name>
    <dbReference type="NCBI Taxonomy" id="323259"/>
    <lineage>
        <taxon>Archaea</taxon>
        <taxon>Methanobacteriati</taxon>
        <taxon>Methanobacteriota</taxon>
        <taxon>Stenosarchaea group</taxon>
        <taxon>Methanomicrobia</taxon>
        <taxon>Methanomicrobiales</taxon>
        <taxon>Methanospirillaceae</taxon>
        <taxon>Methanospirillum</taxon>
    </lineage>
</organism>
<sequence>MKAQVLTLTGSVAHEIELPPVFSSEFRPDLIKKAVIAQQSRRYQPHGAYVYAGITASAVGWGSGRGVSHVPRLKNSSRAAKVPQAKGGREAHPPKVEKVLIRNINQKEKRKALNSAIAATISPELVRSRGHVFTGSLPYVLSGDFESLKKTKEVIAALRAVGVYGDVERAERSRKVRAGRGKLRGRRYKQRKSLLIVTGKERLRAARNLAGVDVCLVDNLNVELLAPGTHSARLTLWTEDAVRKLGGEQ</sequence>
<dbReference type="EMBL" id="CP000254">
    <property type="protein sequence ID" value="ABD41957.1"/>
    <property type="molecule type" value="Genomic_DNA"/>
</dbReference>
<dbReference type="RefSeq" id="WP_011449215.1">
    <property type="nucleotide sequence ID" value="NC_007796.1"/>
</dbReference>
<dbReference type="SMR" id="Q2FU92"/>
<dbReference type="FunCoup" id="Q2FU92">
    <property type="interactions" value="167"/>
</dbReference>
<dbReference type="STRING" id="323259.Mhun_2252"/>
<dbReference type="EnsemblBacteria" id="ABD41957">
    <property type="protein sequence ID" value="ABD41957"/>
    <property type="gene ID" value="Mhun_2252"/>
</dbReference>
<dbReference type="GeneID" id="3924213"/>
<dbReference type="KEGG" id="mhu:Mhun_2252"/>
<dbReference type="eggNOG" id="arCOG04071">
    <property type="taxonomic scope" value="Archaea"/>
</dbReference>
<dbReference type="HOGENOM" id="CLU_026535_0_0_2"/>
<dbReference type="InParanoid" id="Q2FU92"/>
<dbReference type="OrthoDB" id="10737at2157"/>
<dbReference type="Proteomes" id="UP000001941">
    <property type="component" value="Chromosome"/>
</dbReference>
<dbReference type="GO" id="GO:1990904">
    <property type="term" value="C:ribonucleoprotein complex"/>
    <property type="evidence" value="ECO:0007669"/>
    <property type="project" value="UniProtKB-KW"/>
</dbReference>
<dbReference type="GO" id="GO:0005840">
    <property type="term" value="C:ribosome"/>
    <property type="evidence" value="ECO:0007669"/>
    <property type="project" value="UniProtKB-KW"/>
</dbReference>
<dbReference type="GO" id="GO:0019843">
    <property type="term" value="F:rRNA binding"/>
    <property type="evidence" value="ECO:0007669"/>
    <property type="project" value="UniProtKB-UniRule"/>
</dbReference>
<dbReference type="GO" id="GO:0003735">
    <property type="term" value="F:structural constituent of ribosome"/>
    <property type="evidence" value="ECO:0007669"/>
    <property type="project" value="InterPro"/>
</dbReference>
<dbReference type="GO" id="GO:0006412">
    <property type="term" value="P:translation"/>
    <property type="evidence" value="ECO:0007669"/>
    <property type="project" value="UniProtKB-UniRule"/>
</dbReference>
<dbReference type="Gene3D" id="3.40.1370.10">
    <property type="match status" value="1"/>
</dbReference>
<dbReference type="HAMAP" id="MF_01328_A">
    <property type="entry name" value="Ribosomal_uL4_A"/>
    <property type="match status" value="1"/>
</dbReference>
<dbReference type="InterPro" id="IPR002136">
    <property type="entry name" value="Ribosomal_uL4"/>
</dbReference>
<dbReference type="InterPro" id="IPR023574">
    <property type="entry name" value="Ribosomal_uL4_dom_sf"/>
</dbReference>
<dbReference type="InterPro" id="IPR013000">
    <property type="entry name" value="Ribosomal_uL4_euk/arc_CS"/>
</dbReference>
<dbReference type="InterPro" id="IPR045240">
    <property type="entry name" value="Ribosomal_uL4_euk/arch"/>
</dbReference>
<dbReference type="InterPro" id="IPR019970">
    <property type="entry name" value="Ribosomall_uL4-arc"/>
</dbReference>
<dbReference type="NCBIfam" id="TIGR03672">
    <property type="entry name" value="rpl4p_arch"/>
    <property type="match status" value="1"/>
</dbReference>
<dbReference type="PANTHER" id="PTHR19431">
    <property type="entry name" value="60S RIBOSOMAL PROTEIN L4"/>
    <property type="match status" value="1"/>
</dbReference>
<dbReference type="Pfam" id="PF00573">
    <property type="entry name" value="Ribosomal_L4"/>
    <property type="match status" value="1"/>
</dbReference>
<dbReference type="SUPFAM" id="SSF52166">
    <property type="entry name" value="Ribosomal protein L4"/>
    <property type="match status" value="1"/>
</dbReference>
<dbReference type="PROSITE" id="PS00939">
    <property type="entry name" value="RIBOSOMAL_L1E"/>
    <property type="match status" value="1"/>
</dbReference>
<keyword id="KW-1185">Reference proteome</keyword>
<keyword id="KW-0687">Ribonucleoprotein</keyword>
<keyword id="KW-0689">Ribosomal protein</keyword>
<keyword id="KW-0694">RNA-binding</keyword>
<keyword id="KW-0699">rRNA-binding</keyword>
<protein>
    <recommendedName>
        <fullName evidence="1">Large ribosomal subunit protein uL4</fullName>
    </recommendedName>
    <alternativeName>
        <fullName evidence="2">50S ribosomal protein L4</fullName>
    </alternativeName>
</protein>
<proteinExistence type="inferred from homology"/>
<accession>Q2FU92</accession>